<dbReference type="EC" id="3.1.3.16" evidence="2"/>
<dbReference type="EMBL" id="BC085459">
    <property type="protein sequence ID" value="AAH85459.1"/>
    <property type="molecule type" value="mRNA"/>
</dbReference>
<dbReference type="RefSeq" id="NP_001007379.1">
    <property type="nucleotide sequence ID" value="NM_001007378.1"/>
</dbReference>
<dbReference type="SMR" id="Q5U3N5"/>
<dbReference type="FunCoup" id="Q5U3N5">
    <property type="interactions" value="1430"/>
</dbReference>
<dbReference type="STRING" id="7955.ENSDARP00000016882"/>
<dbReference type="PaxDb" id="7955-ENSDARP00000016882"/>
<dbReference type="GeneID" id="492506"/>
<dbReference type="KEGG" id="dre:492506"/>
<dbReference type="AGR" id="ZFIN:ZDB-GENE-041114-74"/>
<dbReference type="CTD" id="492506"/>
<dbReference type="ZFIN" id="ZDB-GENE-041114-74">
    <property type="gene designation" value="pptc7a"/>
</dbReference>
<dbReference type="eggNOG" id="KOG1379">
    <property type="taxonomic scope" value="Eukaryota"/>
</dbReference>
<dbReference type="InParanoid" id="Q5U3N5"/>
<dbReference type="OrthoDB" id="60843at2759"/>
<dbReference type="PhylomeDB" id="Q5U3N5"/>
<dbReference type="PRO" id="PR:Q5U3N5"/>
<dbReference type="Proteomes" id="UP000000437">
    <property type="component" value="Chromosome 8"/>
</dbReference>
<dbReference type="GO" id="GO:0005759">
    <property type="term" value="C:mitochondrial matrix"/>
    <property type="evidence" value="ECO:0007669"/>
    <property type="project" value="UniProtKB-SubCell"/>
</dbReference>
<dbReference type="GO" id="GO:0005739">
    <property type="term" value="C:mitochondrion"/>
    <property type="evidence" value="ECO:0000318"/>
    <property type="project" value="GO_Central"/>
</dbReference>
<dbReference type="GO" id="GO:0046872">
    <property type="term" value="F:metal ion binding"/>
    <property type="evidence" value="ECO:0007669"/>
    <property type="project" value="UniProtKB-KW"/>
</dbReference>
<dbReference type="GO" id="GO:0004722">
    <property type="term" value="F:protein serine/threonine phosphatase activity"/>
    <property type="evidence" value="ECO:0000318"/>
    <property type="project" value="GO_Central"/>
</dbReference>
<dbReference type="GO" id="GO:0010795">
    <property type="term" value="P:regulation of ubiquinone biosynthetic process"/>
    <property type="evidence" value="ECO:0000318"/>
    <property type="project" value="GO_Central"/>
</dbReference>
<dbReference type="FunFam" id="3.60.40.10:FF:000009">
    <property type="entry name" value="Blast:Protein phosphatase PTC7 homolog"/>
    <property type="match status" value="1"/>
</dbReference>
<dbReference type="Gene3D" id="3.60.40.10">
    <property type="entry name" value="PPM-type phosphatase domain"/>
    <property type="match status" value="1"/>
</dbReference>
<dbReference type="InterPro" id="IPR036457">
    <property type="entry name" value="PPM-type-like_dom_sf"/>
</dbReference>
<dbReference type="InterPro" id="IPR001932">
    <property type="entry name" value="PPM-type_phosphatase-like_dom"/>
</dbReference>
<dbReference type="InterPro" id="IPR039123">
    <property type="entry name" value="PPTC7"/>
</dbReference>
<dbReference type="PANTHER" id="PTHR12320">
    <property type="entry name" value="PROTEIN PHOSPHATASE 2C"/>
    <property type="match status" value="1"/>
</dbReference>
<dbReference type="PANTHER" id="PTHR12320:SF40">
    <property type="entry name" value="PROTEIN PHOSPHATASE PTC7 HOMOLOG"/>
    <property type="match status" value="1"/>
</dbReference>
<dbReference type="Pfam" id="PF07228">
    <property type="entry name" value="SpoIIE"/>
    <property type="match status" value="1"/>
</dbReference>
<dbReference type="SMART" id="SM00331">
    <property type="entry name" value="PP2C_SIG"/>
    <property type="match status" value="1"/>
</dbReference>
<dbReference type="SMART" id="SM00332">
    <property type="entry name" value="PP2Cc"/>
    <property type="match status" value="1"/>
</dbReference>
<dbReference type="SUPFAM" id="SSF81606">
    <property type="entry name" value="PP2C-like"/>
    <property type="match status" value="1"/>
</dbReference>
<dbReference type="PROSITE" id="PS51746">
    <property type="entry name" value="PPM_2"/>
    <property type="match status" value="1"/>
</dbReference>
<name>PPTC7_DANRE</name>
<keyword id="KW-0378">Hydrolase</keyword>
<keyword id="KW-0460">Magnesium</keyword>
<keyword id="KW-0464">Manganese</keyword>
<keyword id="KW-0479">Metal-binding</keyword>
<keyword id="KW-0496">Mitochondrion</keyword>
<keyword id="KW-0904">Protein phosphatase</keyword>
<keyword id="KW-1185">Reference proteome</keyword>
<keyword id="KW-0809">Transit peptide</keyword>
<protein>
    <recommendedName>
        <fullName>Protein phosphatase PTC7 homolog</fullName>
        <ecNumber evidence="2">3.1.3.16</ecNumber>
    </recommendedName>
</protein>
<comment type="function">
    <text evidence="2">Protein phosphatase which positively regulates biosynthesis of the ubiquinone, coenzyme Q (By similarity). Dephosphorylates the ubiquinone biosynthesis protein coq7 which is likely to lead to its activation (By similarity).</text>
</comment>
<comment type="catalytic activity">
    <reaction evidence="4">
        <text>O-phospho-L-seryl-[protein] + H2O = L-seryl-[protein] + phosphate</text>
        <dbReference type="Rhea" id="RHEA:20629"/>
        <dbReference type="Rhea" id="RHEA-COMP:9863"/>
        <dbReference type="Rhea" id="RHEA-COMP:11604"/>
        <dbReference type="ChEBI" id="CHEBI:15377"/>
        <dbReference type="ChEBI" id="CHEBI:29999"/>
        <dbReference type="ChEBI" id="CHEBI:43474"/>
        <dbReference type="ChEBI" id="CHEBI:83421"/>
        <dbReference type="EC" id="3.1.3.16"/>
    </reaction>
</comment>
<comment type="catalytic activity">
    <reaction evidence="2">
        <text>O-phospho-L-threonyl-[protein] + H2O = L-threonyl-[protein] + phosphate</text>
        <dbReference type="Rhea" id="RHEA:47004"/>
        <dbReference type="Rhea" id="RHEA-COMP:11060"/>
        <dbReference type="Rhea" id="RHEA-COMP:11605"/>
        <dbReference type="ChEBI" id="CHEBI:15377"/>
        <dbReference type="ChEBI" id="CHEBI:30013"/>
        <dbReference type="ChEBI" id="CHEBI:43474"/>
        <dbReference type="ChEBI" id="CHEBI:61977"/>
        <dbReference type="EC" id="3.1.3.16"/>
    </reaction>
</comment>
<comment type="cofactor">
    <cofactor evidence="2">
        <name>Mg(2+)</name>
        <dbReference type="ChEBI" id="CHEBI:18420"/>
    </cofactor>
    <cofactor evidence="2">
        <name>Mn(2+)</name>
        <dbReference type="ChEBI" id="CHEBI:29035"/>
    </cofactor>
    <text evidence="4">Binds 2 magnesium or manganese ions per subunit.</text>
</comment>
<comment type="subcellular location">
    <subcellularLocation>
        <location evidence="2">Mitochondrion matrix</location>
    </subcellularLocation>
</comment>
<comment type="similarity">
    <text evidence="5">Belongs to the PP2C family.</text>
</comment>
<gene>
    <name type="primary">pptc7</name>
    <name type="ORF">zgc:101865</name>
</gene>
<sequence>MLSVLSYGRLVARAVIGGLSQTDSRDYSLVSASFGFGKDFRKGILKKGMCYGDDACFIARHRSADVLGVADGVGGWRDYGVDPSQFSGTLMRTCERLVKEGRFVPSNPVGILTTSYYELLQNKVPLLGSSTACIVVLDRQSHRLHTANLGDSGFLVVRGGEVVHRSDEQQHYFNTPFQLSIAPPEAEGSVLSDSPDAADSSSFDVQLGDIILTATDGLFDNMPDYMILQELKKLKNTNYESTQQTAKSIAEQAHVLAYDPNYMSPFAQFACDNGLNVRGGKPDDITVLLSIVAEYTD</sequence>
<accession>Q5U3N5</accession>
<proteinExistence type="evidence at transcript level"/>
<evidence type="ECO:0000250" key="1">
    <source>
        <dbReference type="UniProtKB" id="P35813"/>
    </source>
</evidence>
<evidence type="ECO:0000250" key="2">
    <source>
        <dbReference type="UniProtKB" id="Q8NI37"/>
    </source>
</evidence>
<evidence type="ECO:0000255" key="3"/>
<evidence type="ECO:0000255" key="4">
    <source>
        <dbReference type="PROSITE-ProRule" id="PRU01082"/>
    </source>
</evidence>
<evidence type="ECO:0000305" key="5"/>
<organism>
    <name type="scientific">Danio rerio</name>
    <name type="common">Zebrafish</name>
    <name type="synonym">Brachydanio rerio</name>
    <dbReference type="NCBI Taxonomy" id="7955"/>
    <lineage>
        <taxon>Eukaryota</taxon>
        <taxon>Metazoa</taxon>
        <taxon>Chordata</taxon>
        <taxon>Craniata</taxon>
        <taxon>Vertebrata</taxon>
        <taxon>Euteleostomi</taxon>
        <taxon>Actinopterygii</taxon>
        <taxon>Neopterygii</taxon>
        <taxon>Teleostei</taxon>
        <taxon>Ostariophysi</taxon>
        <taxon>Cypriniformes</taxon>
        <taxon>Danionidae</taxon>
        <taxon>Danioninae</taxon>
        <taxon>Danio</taxon>
    </lineage>
</organism>
<reference key="1">
    <citation type="submission" date="2004-11" db="EMBL/GenBank/DDBJ databases">
        <authorList>
            <consortium name="NIH - Zebrafish Gene Collection (ZGC) project"/>
        </authorList>
    </citation>
    <scope>NUCLEOTIDE SEQUENCE [LARGE SCALE MRNA]</scope>
    <source>
        <tissue>Larva</tissue>
    </source>
</reference>
<feature type="transit peptide" description="Mitochondrion" evidence="3">
    <location>
        <begin position="1"/>
        <end position="27"/>
    </location>
</feature>
<feature type="chain" id="PRO_0000328747" description="Protein phosphatase PTC7 homolog">
    <location>
        <begin position="28"/>
        <end position="297"/>
    </location>
</feature>
<feature type="domain" description="PPM-type phosphatase" evidence="4">
    <location>
        <begin position="28"/>
        <end position="292"/>
    </location>
</feature>
<feature type="binding site" evidence="1">
    <location>
        <position position="71"/>
    </location>
    <ligand>
        <name>Mn(2+)</name>
        <dbReference type="ChEBI" id="CHEBI:29035"/>
        <label>1</label>
    </ligand>
</feature>
<feature type="binding site" evidence="1">
    <location>
        <position position="71"/>
    </location>
    <ligand>
        <name>Mn(2+)</name>
        <dbReference type="ChEBI" id="CHEBI:29035"/>
        <label>2</label>
    </ligand>
</feature>
<feature type="binding site" evidence="1">
    <location>
        <position position="72"/>
    </location>
    <ligand>
        <name>Mn(2+)</name>
        <dbReference type="ChEBI" id="CHEBI:29035"/>
        <label>1</label>
    </ligand>
</feature>
<feature type="binding site" evidence="1">
    <location>
        <position position="216"/>
    </location>
    <ligand>
        <name>Mn(2+)</name>
        <dbReference type="ChEBI" id="CHEBI:29035"/>
        <label>2</label>
    </ligand>
</feature>